<name>RL10_STRCO</name>
<organism>
    <name type="scientific">Streptomyces coelicolor (strain ATCC BAA-471 / A3(2) / M145)</name>
    <dbReference type="NCBI Taxonomy" id="100226"/>
    <lineage>
        <taxon>Bacteria</taxon>
        <taxon>Bacillati</taxon>
        <taxon>Actinomycetota</taxon>
        <taxon>Actinomycetes</taxon>
        <taxon>Kitasatosporales</taxon>
        <taxon>Streptomycetaceae</taxon>
        <taxon>Streptomyces</taxon>
        <taxon>Streptomyces albidoflavus group</taxon>
    </lineage>
</organism>
<proteinExistence type="inferred from homology"/>
<evidence type="ECO:0000250" key="1"/>
<evidence type="ECO:0000305" key="2"/>
<accession>P41103</accession>
<keyword id="KW-1185">Reference proteome</keyword>
<keyword id="KW-0687">Ribonucleoprotein</keyword>
<keyword id="KW-0689">Ribosomal protein</keyword>
<keyword id="KW-0694">RNA-binding</keyword>
<keyword id="KW-0699">rRNA-binding</keyword>
<protein>
    <recommendedName>
        <fullName evidence="2">Large ribosomal subunit protein uL10</fullName>
    </recommendedName>
    <alternativeName>
        <fullName>50S ribosomal protein L10</fullName>
    </alternativeName>
</protein>
<comment type="function">
    <text evidence="1">Forms part of the ribosomal stalk, playing a central role in the interaction of the ribosome with GTP-bound translation factors.</text>
</comment>
<comment type="subunit">
    <text evidence="1">Part of the ribosomal stalk of the 50S ribosomal subunit. The N-terminus interacts with L11 and the large rRNA to form the base of the stalk. The C-terminus forms an elongated spine to which L12 dimers bind in a sequential fashion forming a multimeric L10(L12)X complex (By similarity).</text>
</comment>
<comment type="similarity">
    <text evidence="2">Belongs to the universal ribosomal protein uL10 family.</text>
</comment>
<gene>
    <name type="primary">rplJ</name>
    <name type="ordered locus">SCO4652</name>
    <name type="ORF">SCD82.23</name>
</gene>
<sequence>MATPEKAAAVAELTDKFRSSNAAVLTEYRGLTVAQLKTLRRSLGENAQYAVVKNTLTKIAANEAGITLDDQLFAGPTAVAFVTGDPVESAKGLRDFAKDNPNLVIKGGVLDGKAMSADEIKKLADLESREVLLSKLAGAFKGKQSQTAQLFQALPSKLVRTVDALRAKQDEQGGAE</sequence>
<reference key="1">
    <citation type="journal article" date="1994" name="Mol. Microbiol.">
        <title>Synthesis of ribosomal proteins during growth of Streptomyces coelicolor.</title>
        <authorList>
            <person name="Blanco G."/>
            <person name="Rodicio R."/>
            <person name="Puglia A.M."/>
            <person name="Mendez C."/>
            <person name="Thompson C.J."/>
            <person name="Salas J.A."/>
        </authorList>
    </citation>
    <scope>NUCLEOTIDE SEQUENCE [GENOMIC DNA]</scope>
    <source>
        <strain>A3(2) / NRRL B-16638</strain>
    </source>
</reference>
<reference key="2">
    <citation type="journal article" date="2002" name="Nature">
        <title>Complete genome sequence of the model actinomycete Streptomyces coelicolor A3(2).</title>
        <authorList>
            <person name="Bentley S.D."/>
            <person name="Chater K.F."/>
            <person name="Cerdeno-Tarraga A.-M."/>
            <person name="Challis G.L."/>
            <person name="Thomson N.R."/>
            <person name="James K.D."/>
            <person name="Harris D.E."/>
            <person name="Quail M.A."/>
            <person name="Kieser H."/>
            <person name="Harper D."/>
            <person name="Bateman A."/>
            <person name="Brown S."/>
            <person name="Chandra G."/>
            <person name="Chen C.W."/>
            <person name="Collins M."/>
            <person name="Cronin A."/>
            <person name="Fraser A."/>
            <person name="Goble A."/>
            <person name="Hidalgo J."/>
            <person name="Hornsby T."/>
            <person name="Howarth S."/>
            <person name="Huang C.-H."/>
            <person name="Kieser T."/>
            <person name="Larke L."/>
            <person name="Murphy L.D."/>
            <person name="Oliver K."/>
            <person name="O'Neil S."/>
            <person name="Rabbinowitsch E."/>
            <person name="Rajandream M.A."/>
            <person name="Rutherford K.M."/>
            <person name="Rutter S."/>
            <person name="Seeger K."/>
            <person name="Saunders D."/>
            <person name="Sharp S."/>
            <person name="Squares R."/>
            <person name="Squares S."/>
            <person name="Taylor K."/>
            <person name="Warren T."/>
            <person name="Wietzorrek A."/>
            <person name="Woodward J.R."/>
            <person name="Barrell B.G."/>
            <person name="Parkhill J."/>
            <person name="Hopwood D.A."/>
        </authorList>
    </citation>
    <scope>NUCLEOTIDE SEQUENCE [LARGE SCALE GENOMIC DNA]</scope>
    <source>
        <strain>ATCC BAA-471 / A3(2) / M145</strain>
    </source>
</reference>
<feature type="chain" id="PRO_0000154719" description="Large ribosomal subunit protein uL10">
    <location>
        <begin position="1"/>
        <end position="176"/>
    </location>
</feature>
<dbReference type="EMBL" id="L24552">
    <property type="protein sequence ID" value="AAC36896.1"/>
    <property type="molecule type" value="Genomic_DNA"/>
</dbReference>
<dbReference type="EMBL" id="AL939120">
    <property type="protein sequence ID" value="CAB77426.1"/>
    <property type="molecule type" value="Genomic_DNA"/>
</dbReference>
<dbReference type="PIR" id="S49536">
    <property type="entry name" value="S49536"/>
</dbReference>
<dbReference type="RefSeq" id="NP_628813.1">
    <property type="nucleotide sequence ID" value="NC_003888.3"/>
</dbReference>
<dbReference type="RefSeq" id="WP_003974311.1">
    <property type="nucleotide sequence ID" value="NZ_VNID01000028.1"/>
</dbReference>
<dbReference type="SMR" id="P41103"/>
<dbReference type="FunCoup" id="P41103">
    <property type="interactions" value="278"/>
</dbReference>
<dbReference type="STRING" id="100226.gene:17762301"/>
<dbReference type="PaxDb" id="100226-SCO4652"/>
<dbReference type="GeneID" id="97358156"/>
<dbReference type="KEGG" id="sco:SCO4652"/>
<dbReference type="PATRIC" id="fig|100226.15.peg.4723"/>
<dbReference type="eggNOG" id="COG0244">
    <property type="taxonomic scope" value="Bacteria"/>
</dbReference>
<dbReference type="HOGENOM" id="CLU_092227_1_0_11"/>
<dbReference type="InParanoid" id="P41103"/>
<dbReference type="OrthoDB" id="3186107at2"/>
<dbReference type="PhylomeDB" id="P41103"/>
<dbReference type="Proteomes" id="UP000001973">
    <property type="component" value="Chromosome"/>
</dbReference>
<dbReference type="GO" id="GO:0022625">
    <property type="term" value="C:cytosolic large ribosomal subunit"/>
    <property type="evidence" value="ECO:0000318"/>
    <property type="project" value="GO_Central"/>
</dbReference>
<dbReference type="GO" id="GO:0070180">
    <property type="term" value="F:large ribosomal subunit rRNA binding"/>
    <property type="evidence" value="ECO:0007669"/>
    <property type="project" value="UniProtKB-UniRule"/>
</dbReference>
<dbReference type="GO" id="GO:0003735">
    <property type="term" value="F:structural constituent of ribosome"/>
    <property type="evidence" value="ECO:0000318"/>
    <property type="project" value="GO_Central"/>
</dbReference>
<dbReference type="GO" id="GO:0006412">
    <property type="term" value="P:translation"/>
    <property type="evidence" value="ECO:0000318"/>
    <property type="project" value="GO_Central"/>
</dbReference>
<dbReference type="CDD" id="cd05797">
    <property type="entry name" value="Ribosomal_L10"/>
    <property type="match status" value="1"/>
</dbReference>
<dbReference type="FunFam" id="3.30.70.1730:FF:000003">
    <property type="entry name" value="50S ribosomal protein L10"/>
    <property type="match status" value="1"/>
</dbReference>
<dbReference type="Gene3D" id="3.30.70.1730">
    <property type="match status" value="1"/>
</dbReference>
<dbReference type="Gene3D" id="6.10.250.290">
    <property type="match status" value="1"/>
</dbReference>
<dbReference type="HAMAP" id="MF_00362">
    <property type="entry name" value="Ribosomal_uL10"/>
    <property type="match status" value="1"/>
</dbReference>
<dbReference type="InterPro" id="IPR001790">
    <property type="entry name" value="Ribosomal_uL10"/>
</dbReference>
<dbReference type="InterPro" id="IPR043141">
    <property type="entry name" value="Ribosomal_uL10-like_sf"/>
</dbReference>
<dbReference type="InterPro" id="IPR022973">
    <property type="entry name" value="Ribosomal_uL10_bac"/>
</dbReference>
<dbReference type="InterPro" id="IPR047865">
    <property type="entry name" value="Ribosomal_uL10_bac_type"/>
</dbReference>
<dbReference type="InterPro" id="IPR002363">
    <property type="entry name" value="Ribosomal_uL10_CS_bac"/>
</dbReference>
<dbReference type="NCBIfam" id="NF000955">
    <property type="entry name" value="PRK00099.1-1"/>
    <property type="match status" value="1"/>
</dbReference>
<dbReference type="PANTHER" id="PTHR11560">
    <property type="entry name" value="39S RIBOSOMAL PROTEIN L10, MITOCHONDRIAL"/>
    <property type="match status" value="1"/>
</dbReference>
<dbReference type="Pfam" id="PF00466">
    <property type="entry name" value="Ribosomal_L10"/>
    <property type="match status" value="1"/>
</dbReference>
<dbReference type="SUPFAM" id="SSF160369">
    <property type="entry name" value="Ribosomal protein L10-like"/>
    <property type="match status" value="1"/>
</dbReference>
<dbReference type="PROSITE" id="PS01109">
    <property type="entry name" value="RIBOSOMAL_L10"/>
    <property type="match status" value="1"/>
</dbReference>